<reference key="1">
    <citation type="journal article" date="2002" name="DNA Res.">
        <title>Complete genome structure of the thermophilic cyanobacterium Thermosynechococcus elongatus BP-1.</title>
        <authorList>
            <person name="Nakamura Y."/>
            <person name="Kaneko T."/>
            <person name="Sato S."/>
            <person name="Ikeuchi M."/>
            <person name="Katoh H."/>
            <person name="Sasamoto S."/>
            <person name="Watanabe A."/>
            <person name="Iriguchi M."/>
            <person name="Kawashima K."/>
            <person name="Kimura T."/>
            <person name="Kishida Y."/>
            <person name="Kiyokawa C."/>
            <person name="Kohara M."/>
            <person name="Matsumoto M."/>
            <person name="Matsuno A."/>
            <person name="Nakazaki N."/>
            <person name="Shimpo S."/>
            <person name="Sugimoto M."/>
            <person name="Takeuchi C."/>
            <person name="Yamada M."/>
            <person name="Tabata S."/>
        </authorList>
    </citation>
    <scope>NUCLEOTIDE SEQUENCE [LARGE SCALE GENOMIC DNA]</scope>
    <source>
        <strain>NIES-2133 / IAM M-273 / BP-1</strain>
    </source>
</reference>
<reference key="2">
    <citation type="journal article" date="2006" name="J. Mol. Biol.">
        <title>Crystal structure of a non-discriminating glutamyl-tRNA synthetase.</title>
        <authorList>
            <person name="Schulze J.O."/>
            <person name="Masoumi A."/>
            <person name="Nickel D."/>
            <person name="Jahn M."/>
            <person name="Jahn D."/>
            <person name="Schubert W.-D."/>
            <person name="Heinz D.W."/>
        </authorList>
    </citation>
    <scope>X-RAY CRYSTALLOGRAPHY (2.45 ANGSTROMS) IN COMPLEX WITH GLUTAMATE</scope>
    <scope>FUNCTION</scope>
    <scope>ABSENCE OF COFACTOR REQUIREMENT</scope>
    <scope>BIOPHYSICOCHEMICAL PROPERTIES</scope>
</reference>
<name>SYE_THEVB</name>
<feature type="chain" id="PRO_0000119674" description="Glutamate--tRNA ligase">
    <location>
        <begin position="1"/>
        <end position="485"/>
    </location>
</feature>
<feature type="short sequence motif" description="'HIGH' region">
    <location>
        <begin position="9"/>
        <end position="19"/>
    </location>
</feature>
<feature type="short sequence motif" description="'KMSKS' region">
    <location>
        <begin position="248"/>
        <end position="252"/>
    </location>
</feature>
<feature type="binding site" evidence="2">
    <location>
        <position position="6"/>
    </location>
    <ligand>
        <name>L-glutamate</name>
        <dbReference type="ChEBI" id="CHEBI:29985"/>
    </ligand>
</feature>
<feature type="binding site" evidence="2">
    <location>
        <position position="192"/>
    </location>
    <ligand>
        <name>L-glutamate</name>
        <dbReference type="ChEBI" id="CHEBI:29985"/>
    </ligand>
</feature>
<feature type="binding site">
    <location>
        <begin position="210"/>
        <end position="214"/>
    </location>
    <ligand>
        <name>L-glutamate</name>
        <dbReference type="ChEBI" id="CHEBI:29985"/>
    </ligand>
</feature>
<feature type="binding site" evidence="1">
    <location>
        <position position="251"/>
    </location>
    <ligand>
        <name>ATP</name>
        <dbReference type="ChEBI" id="CHEBI:30616"/>
    </ligand>
</feature>
<feature type="strand" evidence="4">
    <location>
        <begin position="4"/>
        <end position="7"/>
    </location>
</feature>
<feature type="helix" evidence="4">
    <location>
        <begin position="17"/>
        <end position="32"/>
    </location>
</feature>
<feature type="strand" evidence="4">
    <location>
        <begin position="36"/>
        <end position="41"/>
    </location>
</feature>
<feature type="strand" evidence="4">
    <location>
        <begin position="45"/>
        <end position="48"/>
    </location>
</feature>
<feature type="helix" evidence="4">
    <location>
        <begin position="51"/>
        <end position="63"/>
    </location>
</feature>
<feature type="strand" evidence="4">
    <location>
        <begin position="69"/>
        <end position="74"/>
    </location>
</feature>
<feature type="helix" evidence="4">
    <location>
        <begin position="75"/>
        <end position="77"/>
    </location>
</feature>
<feature type="helix" evidence="4">
    <location>
        <begin position="79"/>
        <end position="91"/>
    </location>
</feature>
<feature type="strand" evidence="4">
    <location>
        <begin position="94"/>
        <end position="98"/>
    </location>
</feature>
<feature type="helix" evidence="4">
    <location>
        <begin position="102"/>
        <end position="115"/>
    </location>
</feature>
<feature type="turn" evidence="4">
    <location>
        <begin position="124"/>
        <end position="127"/>
    </location>
</feature>
<feature type="helix" evidence="4">
    <location>
        <begin position="130"/>
        <end position="138"/>
    </location>
</feature>
<feature type="strand" evidence="4">
    <location>
        <begin position="144"/>
        <end position="147"/>
    </location>
</feature>
<feature type="strand" evidence="4">
    <location>
        <begin position="154"/>
        <end position="159"/>
    </location>
</feature>
<feature type="turn" evidence="4">
    <location>
        <begin position="160"/>
        <end position="162"/>
    </location>
</feature>
<feature type="strand" evidence="4">
    <location>
        <begin position="163"/>
        <end position="168"/>
    </location>
</feature>
<feature type="helix" evidence="4">
    <location>
        <begin position="169"/>
        <end position="172"/>
    </location>
</feature>
<feature type="strand" evidence="4">
    <location>
        <begin position="174"/>
        <end position="179"/>
    </location>
</feature>
<feature type="helix" evidence="4">
    <location>
        <begin position="192"/>
        <end position="202"/>
    </location>
</feature>
<feature type="strand" evidence="4">
    <location>
        <begin position="206"/>
        <end position="211"/>
    </location>
</feature>
<feature type="helix" evidence="4">
    <location>
        <begin position="212"/>
        <end position="216"/>
    </location>
</feature>
<feature type="helix" evidence="4">
    <location>
        <begin position="217"/>
        <end position="227"/>
    </location>
</feature>
<feature type="strand" evidence="4">
    <location>
        <begin position="234"/>
        <end position="238"/>
    </location>
</feature>
<feature type="strand" evidence="4">
    <location>
        <begin position="244"/>
        <end position="248"/>
    </location>
</feature>
<feature type="helix" evidence="4">
    <location>
        <begin position="258"/>
        <end position="263"/>
    </location>
</feature>
<feature type="helix" evidence="4">
    <location>
        <begin position="268"/>
        <end position="277"/>
    </location>
</feature>
<feature type="turn" evidence="4">
    <location>
        <begin position="284"/>
        <end position="286"/>
    </location>
</feature>
<feature type="helix" evidence="4">
    <location>
        <begin position="292"/>
        <end position="298"/>
    </location>
</feature>
<feature type="helix" evidence="4">
    <location>
        <begin position="313"/>
        <end position="324"/>
    </location>
</feature>
<feature type="helix" evidence="4">
    <location>
        <begin position="329"/>
        <end position="342"/>
    </location>
</feature>
<feature type="turn" evidence="4">
    <location>
        <begin position="349"/>
        <end position="352"/>
    </location>
</feature>
<feature type="helix" evidence="4">
    <location>
        <begin position="353"/>
        <end position="363"/>
    </location>
</feature>
<feature type="helix" evidence="4">
    <location>
        <begin position="364"/>
        <end position="366"/>
    </location>
</feature>
<feature type="helix" evidence="4">
    <location>
        <begin position="370"/>
        <end position="372"/>
    </location>
</feature>
<feature type="helix" evidence="4">
    <location>
        <begin position="373"/>
        <end position="381"/>
    </location>
</feature>
<feature type="strand" evidence="4">
    <location>
        <begin position="382"/>
        <end position="384"/>
    </location>
</feature>
<feature type="helix" evidence="4">
    <location>
        <begin position="389"/>
        <end position="395"/>
    </location>
</feature>
<feature type="helix" evidence="4">
    <location>
        <begin position="400"/>
        <end position="410"/>
    </location>
</feature>
<feature type="strand" evidence="4">
    <location>
        <begin position="413"/>
        <end position="415"/>
    </location>
</feature>
<feature type="helix" evidence="4">
    <location>
        <begin position="419"/>
        <end position="433"/>
    </location>
</feature>
<feature type="helix" evidence="4">
    <location>
        <begin position="437"/>
        <end position="449"/>
    </location>
</feature>
<feature type="strand" evidence="4">
    <location>
        <begin position="450"/>
        <end position="453"/>
    </location>
</feature>
<feature type="helix" evidence="4">
    <location>
        <begin position="457"/>
        <end position="466"/>
    </location>
</feature>
<feature type="helix" evidence="4">
    <location>
        <begin position="470"/>
        <end position="484"/>
    </location>
</feature>
<gene>
    <name type="primary">gltX</name>
    <name type="ordered locus">tll0506</name>
</gene>
<protein>
    <recommendedName>
        <fullName>Glutamate--tRNA ligase</fullName>
        <ecNumber>6.1.1.17</ecNumber>
    </recommendedName>
    <alternativeName>
        <fullName>Glutamyl-tRNA synthetase</fullName>
        <shortName>GluRS</shortName>
    </alternativeName>
</protein>
<organism>
    <name type="scientific">Thermosynechococcus vestitus (strain NIES-2133 / IAM M-273 / BP-1)</name>
    <dbReference type="NCBI Taxonomy" id="197221"/>
    <lineage>
        <taxon>Bacteria</taxon>
        <taxon>Bacillati</taxon>
        <taxon>Cyanobacteriota</taxon>
        <taxon>Cyanophyceae</taxon>
        <taxon>Acaryochloridales</taxon>
        <taxon>Thermosynechococcaceae</taxon>
        <taxon>Thermosynechococcus</taxon>
    </lineage>
</organism>
<proteinExistence type="evidence at protein level"/>
<comment type="function">
    <text evidence="2">Non-discriminating glutamyl-tRNA synthetase. Catalyzes the attachment of glutamate to tRNA(Glu) in a two-step reaction: glutamate is first activated by ATP to form Glu-AMP and then transferred to the acceptor end of tRNA(Glu). Acylates both tRNA(Glu) and tRNA(Gln) with glutamate, but has 13-fold higher efficiency with tRNA(Glu).</text>
</comment>
<comment type="catalytic activity">
    <reaction>
        <text>tRNA(Glu) + L-glutamate + ATP = L-glutamyl-tRNA(Glu) + AMP + diphosphate</text>
        <dbReference type="Rhea" id="RHEA:23540"/>
        <dbReference type="Rhea" id="RHEA-COMP:9663"/>
        <dbReference type="Rhea" id="RHEA-COMP:9680"/>
        <dbReference type="ChEBI" id="CHEBI:29985"/>
        <dbReference type="ChEBI" id="CHEBI:30616"/>
        <dbReference type="ChEBI" id="CHEBI:33019"/>
        <dbReference type="ChEBI" id="CHEBI:78442"/>
        <dbReference type="ChEBI" id="CHEBI:78520"/>
        <dbReference type="ChEBI" id="CHEBI:456215"/>
        <dbReference type="EC" id="6.1.1.17"/>
    </reaction>
</comment>
<comment type="cofactor">
    <text>Does not require zinc.</text>
</comment>
<comment type="biophysicochemical properties">
    <kinetics>
        <KM evidence="2">0.79 uM for tRNA-Glu</KM>
        <KM evidence="2">3.7 uM for tRNA-Gln</KM>
    </kinetics>
</comment>
<comment type="subunit">
    <text evidence="1">Monomer.</text>
</comment>
<comment type="subcellular location">
    <subcellularLocation>
        <location>Cytoplasm</location>
    </subcellularLocation>
</comment>
<comment type="miscellaneous">
    <text>This organism lacks a tRNA synthetase for tRNA(Gln). Instead, tRNA(Gln) is first charged with Glu, and then the bound glutamate is converted to glutamine by GatCAB.</text>
</comment>
<comment type="similarity">
    <text evidence="3">Belongs to the class-I aminoacyl-tRNA synthetase family. Glutamate--tRNA ligase type 1 subfamily.</text>
</comment>
<dbReference type="EC" id="6.1.1.17"/>
<dbReference type="EMBL" id="BA000039">
    <property type="protein sequence ID" value="BAC08058.1"/>
    <property type="molecule type" value="Genomic_DNA"/>
</dbReference>
<dbReference type="RefSeq" id="NP_681296.1">
    <property type="nucleotide sequence ID" value="NC_004113.1"/>
</dbReference>
<dbReference type="RefSeq" id="WP_011056357.1">
    <property type="nucleotide sequence ID" value="NC_004113.1"/>
</dbReference>
<dbReference type="PDB" id="2CFO">
    <property type="method" value="X-ray"/>
    <property type="resolution" value="2.45 A"/>
    <property type="chains" value="A/B=2-485"/>
</dbReference>
<dbReference type="PDBsum" id="2CFO"/>
<dbReference type="SMR" id="Q8DLI5"/>
<dbReference type="STRING" id="197221.gene:10747095"/>
<dbReference type="EnsemblBacteria" id="BAC08058">
    <property type="protein sequence ID" value="BAC08058"/>
    <property type="gene ID" value="BAC08058"/>
</dbReference>
<dbReference type="KEGG" id="tel:tll0506"/>
<dbReference type="PATRIC" id="fig|197221.4.peg.533"/>
<dbReference type="eggNOG" id="COG0008">
    <property type="taxonomic scope" value="Bacteria"/>
</dbReference>
<dbReference type="SABIO-RK" id="Q8DLI5"/>
<dbReference type="EvolutionaryTrace" id="Q8DLI5"/>
<dbReference type="Proteomes" id="UP000000440">
    <property type="component" value="Chromosome"/>
</dbReference>
<dbReference type="GO" id="GO:0005829">
    <property type="term" value="C:cytosol"/>
    <property type="evidence" value="ECO:0007669"/>
    <property type="project" value="TreeGrafter"/>
</dbReference>
<dbReference type="GO" id="GO:0005524">
    <property type="term" value="F:ATP binding"/>
    <property type="evidence" value="ECO:0007669"/>
    <property type="project" value="UniProtKB-UniRule"/>
</dbReference>
<dbReference type="GO" id="GO:0004818">
    <property type="term" value="F:glutamate-tRNA ligase activity"/>
    <property type="evidence" value="ECO:0007669"/>
    <property type="project" value="UniProtKB-UniRule"/>
</dbReference>
<dbReference type="GO" id="GO:0000049">
    <property type="term" value="F:tRNA binding"/>
    <property type="evidence" value="ECO:0007669"/>
    <property type="project" value="InterPro"/>
</dbReference>
<dbReference type="GO" id="GO:0008270">
    <property type="term" value="F:zinc ion binding"/>
    <property type="evidence" value="ECO:0007669"/>
    <property type="project" value="UniProtKB-UniRule"/>
</dbReference>
<dbReference type="GO" id="GO:0006424">
    <property type="term" value="P:glutamyl-tRNA aminoacylation"/>
    <property type="evidence" value="ECO:0007669"/>
    <property type="project" value="UniProtKB-UniRule"/>
</dbReference>
<dbReference type="CDD" id="cd00808">
    <property type="entry name" value="GluRS_core"/>
    <property type="match status" value="1"/>
</dbReference>
<dbReference type="FunFam" id="3.40.50.620:FF:000007">
    <property type="entry name" value="Glutamate--tRNA ligase"/>
    <property type="match status" value="1"/>
</dbReference>
<dbReference type="Gene3D" id="1.10.10.350">
    <property type="match status" value="1"/>
</dbReference>
<dbReference type="Gene3D" id="1.10.8.70">
    <property type="entry name" value="Glutamate-tRNA synthetase, class I, anticodon-binding domain 1"/>
    <property type="match status" value="1"/>
</dbReference>
<dbReference type="Gene3D" id="1.10.1160.10">
    <property type="entry name" value="Glutamyl-trna Synthetase, Domain 2"/>
    <property type="match status" value="1"/>
</dbReference>
<dbReference type="Gene3D" id="3.90.800.10">
    <property type="entry name" value="Glutamyl-tRNA Synthetase, Domain 3"/>
    <property type="match status" value="1"/>
</dbReference>
<dbReference type="Gene3D" id="3.40.50.620">
    <property type="entry name" value="HUPs"/>
    <property type="match status" value="1"/>
</dbReference>
<dbReference type="HAMAP" id="MF_00022">
    <property type="entry name" value="Glu_tRNA_synth_type1"/>
    <property type="match status" value="1"/>
</dbReference>
<dbReference type="InterPro" id="IPR045462">
    <property type="entry name" value="aa-tRNA-synth_I_cd-bd"/>
</dbReference>
<dbReference type="InterPro" id="IPR020751">
    <property type="entry name" value="aa-tRNA-synth_I_codon-bd_sub2"/>
</dbReference>
<dbReference type="InterPro" id="IPR001412">
    <property type="entry name" value="aa-tRNA-synth_I_CS"/>
</dbReference>
<dbReference type="InterPro" id="IPR008925">
    <property type="entry name" value="aa_tRNA-synth_I_cd-bd_sf"/>
</dbReference>
<dbReference type="InterPro" id="IPR004527">
    <property type="entry name" value="Glu-tRNA-ligase_bac/mito"/>
</dbReference>
<dbReference type="InterPro" id="IPR020752">
    <property type="entry name" value="Glu-tRNA-synth_I_codon-bd_sub1"/>
</dbReference>
<dbReference type="InterPro" id="IPR000924">
    <property type="entry name" value="Glu/Gln-tRNA-synth"/>
</dbReference>
<dbReference type="InterPro" id="IPR020058">
    <property type="entry name" value="Glu/Gln-tRNA-synth_Ib_cat-dom"/>
</dbReference>
<dbReference type="InterPro" id="IPR020061">
    <property type="entry name" value="Glu_tRNA_lig_a-bdl"/>
</dbReference>
<dbReference type="InterPro" id="IPR049940">
    <property type="entry name" value="GluQ/Sye"/>
</dbReference>
<dbReference type="InterPro" id="IPR033910">
    <property type="entry name" value="GluRS_core"/>
</dbReference>
<dbReference type="InterPro" id="IPR014729">
    <property type="entry name" value="Rossmann-like_a/b/a_fold"/>
</dbReference>
<dbReference type="NCBIfam" id="TIGR00464">
    <property type="entry name" value="gltX_bact"/>
    <property type="match status" value="1"/>
</dbReference>
<dbReference type="NCBIfam" id="NF004315">
    <property type="entry name" value="PRK05710.1-4"/>
    <property type="match status" value="1"/>
</dbReference>
<dbReference type="PANTHER" id="PTHR43311">
    <property type="entry name" value="GLUTAMATE--TRNA LIGASE"/>
    <property type="match status" value="1"/>
</dbReference>
<dbReference type="PANTHER" id="PTHR43311:SF2">
    <property type="entry name" value="GLUTAMATE--TRNA LIGASE, MITOCHONDRIAL-RELATED"/>
    <property type="match status" value="1"/>
</dbReference>
<dbReference type="Pfam" id="PF19269">
    <property type="entry name" value="Anticodon_2"/>
    <property type="match status" value="1"/>
</dbReference>
<dbReference type="Pfam" id="PF00749">
    <property type="entry name" value="tRNA-synt_1c"/>
    <property type="match status" value="1"/>
</dbReference>
<dbReference type="PRINTS" id="PR00987">
    <property type="entry name" value="TRNASYNTHGLU"/>
</dbReference>
<dbReference type="SUPFAM" id="SSF48163">
    <property type="entry name" value="An anticodon-binding domain of class I aminoacyl-tRNA synthetases"/>
    <property type="match status" value="1"/>
</dbReference>
<dbReference type="SUPFAM" id="SSF52374">
    <property type="entry name" value="Nucleotidylyl transferase"/>
    <property type="match status" value="1"/>
</dbReference>
<dbReference type="PROSITE" id="PS00178">
    <property type="entry name" value="AA_TRNA_LIGASE_I"/>
    <property type="match status" value="1"/>
</dbReference>
<accession>Q8DLI5</accession>
<keyword id="KW-0002">3D-structure</keyword>
<keyword id="KW-0030">Aminoacyl-tRNA synthetase</keyword>
<keyword id="KW-0067">ATP-binding</keyword>
<keyword id="KW-0963">Cytoplasm</keyword>
<keyword id="KW-0436">Ligase</keyword>
<keyword id="KW-0547">Nucleotide-binding</keyword>
<keyword id="KW-0648">Protein biosynthesis</keyword>
<keyword id="KW-1185">Reference proteome</keyword>
<evidence type="ECO:0000250" key="1"/>
<evidence type="ECO:0000269" key="2">
    <source>
    </source>
</evidence>
<evidence type="ECO:0000305" key="3"/>
<evidence type="ECO:0007829" key="4">
    <source>
        <dbReference type="PDB" id="2CFO"/>
    </source>
</evidence>
<sequence length="485" mass="54362">MTVRVRLAPSPTGNLHIGTARTAVFNWLYARHRGGKFILRIEDTDRERSRPEYTENILEGLQWLGLTWDEGPYFQSDRLDLYRQAIQTLLDKGLAYYCYCTPEELEALRAEQKAKGQAPRYDNRHRHLTPEEQAAFEAAGRTPVIRFKIEDDRQIEWQDLVRGRVSWQGADLGGDMVIARAAPRGEIGYPLYNLVVVVDDIAMGITDVIRGEDHIGNTPKQILLYEALGATPPNFAHTPLILNSTGQKLSKRDGVTSISDFRAMGYLAPALANYMTLLGWSPPEGVGELFTLDLAAKHFSFERINKAGARFDWDKLNWLNRQYIQQLEPEEFLAELIPLWQGAGYAFDEERDRPWLFDLAQLLQPGLNTLREAIDQGAVFFIPSVTFDSEAMAQLGQPQSATILAYLLEHLPAEPALTVAMGQQLIQQAAKAAGVKKGATMRTLRAALTGAVHGPDLMAAWQILHQRGWDEPRLAAALKQAQTTS</sequence>